<proteinExistence type="inferred from homology"/>
<organism>
    <name type="scientific">Bacillus cereus (strain ATCC 10987 / NRS 248)</name>
    <dbReference type="NCBI Taxonomy" id="222523"/>
    <lineage>
        <taxon>Bacteria</taxon>
        <taxon>Bacillati</taxon>
        <taxon>Bacillota</taxon>
        <taxon>Bacilli</taxon>
        <taxon>Bacillales</taxon>
        <taxon>Bacillaceae</taxon>
        <taxon>Bacillus</taxon>
        <taxon>Bacillus cereus group</taxon>
    </lineage>
</organism>
<dbReference type="EMBL" id="AE017194">
    <property type="protein sequence ID" value="AAS42560.1"/>
    <property type="molecule type" value="Genomic_DNA"/>
</dbReference>
<dbReference type="SMR" id="Q733K3"/>
<dbReference type="KEGG" id="bca:BCE_3655"/>
<dbReference type="HOGENOM" id="CLU_135567_3_0_9"/>
<dbReference type="Proteomes" id="UP000002527">
    <property type="component" value="Chromosome"/>
</dbReference>
<dbReference type="Gene3D" id="1.10.1470.10">
    <property type="entry name" value="YjbJ"/>
    <property type="match status" value="1"/>
</dbReference>
<dbReference type="InterPro" id="IPR008462">
    <property type="entry name" value="CsbD"/>
</dbReference>
<dbReference type="InterPro" id="IPR050423">
    <property type="entry name" value="UPF0337_stress_rsp"/>
</dbReference>
<dbReference type="InterPro" id="IPR036629">
    <property type="entry name" value="YjbJ_sf"/>
</dbReference>
<dbReference type="PANTHER" id="PTHR34977">
    <property type="entry name" value="UPF0337 PROTEIN YJBJ"/>
    <property type="match status" value="1"/>
</dbReference>
<dbReference type="PANTHER" id="PTHR34977:SF1">
    <property type="entry name" value="UPF0337 PROTEIN YJBJ"/>
    <property type="match status" value="1"/>
</dbReference>
<dbReference type="Pfam" id="PF05532">
    <property type="entry name" value="CsbD"/>
    <property type="match status" value="1"/>
</dbReference>
<dbReference type="SUPFAM" id="SSF69047">
    <property type="entry name" value="Hypothetical protein YjbJ"/>
    <property type="match status" value="1"/>
</dbReference>
<evidence type="ECO:0000305" key="1"/>
<reference key="1">
    <citation type="journal article" date="2004" name="Nucleic Acids Res.">
        <title>The genome sequence of Bacillus cereus ATCC 10987 reveals metabolic adaptations and a large plasmid related to Bacillus anthracis pXO1.</title>
        <authorList>
            <person name="Rasko D.A."/>
            <person name="Ravel J."/>
            <person name="Oekstad O.A."/>
            <person name="Helgason E."/>
            <person name="Cer R.Z."/>
            <person name="Jiang L."/>
            <person name="Shores K.A."/>
            <person name="Fouts D.E."/>
            <person name="Tourasse N.J."/>
            <person name="Angiuoli S.V."/>
            <person name="Kolonay J.F."/>
            <person name="Nelson W.C."/>
            <person name="Kolstoe A.-B."/>
            <person name="Fraser C.M."/>
            <person name="Read T.D."/>
        </authorList>
    </citation>
    <scope>NUCLEOTIDE SEQUENCE [LARGE SCALE GENOMIC DNA]</scope>
    <source>
        <strain>ATCC 10987 / NRS 248</strain>
    </source>
</reference>
<comment type="similarity">
    <text evidence="1">Belongs to the UPF0337 (CsbD) family.</text>
</comment>
<feature type="chain" id="PRO_0000209981" description="UPF0337 protein BCE_3655">
    <location>
        <begin position="1"/>
        <end position="67"/>
    </location>
</feature>
<sequence>MTKHDHGLKEKVEGAIDKVKGEVKEVVGKVTDNKKLQAEGKWDKVKGTAKDTVGNVKEKVHEYKEHK</sequence>
<accession>Q733K3</accession>
<name>Y3655_BACC1</name>
<protein>
    <recommendedName>
        <fullName>UPF0337 protein BCE_3655</fullName>
    </recommendedName>
</protein>
<gene>
    <name type="ordered locus">BCE_3655</name>
</gene>